<reference key="1">
    <citation type="submission" date="2008-10" db="EMBL/GenBank/DDBJ databases">
        <title>The complete genome sequence of Helicobacter pylori strain P12.</title>
        <authorList>
            <person name="Fischer W."/>
            <person name="Windhager L."/>
            <person name="Karnholz A."/>
            <person name="Zeiller M."/>
            <person name="Zimmer R."/>
            <person name="Haas R."/>
        </authorList>
    </citation>
    <scope>NUCLEOTIDE SEQUENCE [LARGE SCALE GENOMIC DNA]</scope>
    <source>
        <strain>P12</strain>
    </source>
</reference>
<gene>
    <name evidence="1" type="primary">def</name>
    <name type="ordered locus">HPP12_0800</name>
</gene>
<keyword id="KW-0378">Hydrolase</keyword>
<keyword id="KW-0408">Iron</keyword>
<keyword id="KW-0479">Metal-binding</keyword>
<keyword id="KW-0648">Protein biosynthesis</keyword>
<evidence type="ECO:0000255" key="1">
    <source>
        <dbReference type="HAMAP-Rule" id="MF_00163"/>
    </source>
</evidence>
<dbReference type="EC" id="3.5.1.88" evidence="1"/>
<dbReference type="EMBL" id="CP001217">
    <property type="protein sequence ID" value="ACJ07952.1"/>
    <property type="molecule type" value="Genomic_DNA"/>
</dbReference>
<dbReference type="SMR" id="B6JM24"/>
<dbReference type="KEGG" id="hpp:HPP12_0800"/>
<dbReference type="HOGENOM" id="CLU_061901_2_0_7"/>
<dbReference type="Proteomes" id="UP000008198">
    <property type="component" value="Chromosome"/>
</dbReference>
<dbReference type="GO" id="GO:0046872">
    <property type="term" value="F:metal ion binding"/>
    <property type="evidence" value="ECO:0007669"/>
    <property type="project" value="UniProtKB-KW"/>
</dbReference>
<dbReference type="GO" id="GO:0042586">
    <property type="term" value="F:peptide deformylase activity"/>
    <property type="evidence" value="ECO:0007669"/>
    <property type="project" value="UniProtKB-UniRule"/>
</dbReference>
<dbReference type="GO" id="GO:0043686">
    <property type="term" value="P:co-translational protein modification"/>
    <property type="evidence" value="ECO:0007669"/>
    <property type="project" value="TreeGrafter"/>
</dbReference>
<dbReference type="GO" id="GO:0006412">
    <property type="term" value="P:translation"/>
    <property type="evidence" value="ECO:0007669"/>
    <property type="project" value="UniProtKB-UniRule"/>
</dbReference>
<dbReference type="CDD" id="cd00487">
    <property type="entry name" value="Pep_deformylase"/>
    <property type="match status" value="1"/>
</dbReference>
<dbReference type="FunFam" id="3.90.45.10:FF:000008">
    <property type="entry name" value="Peptide deformylase"/>
    <property type="match status" value="1"/>
</dbReference>
<dbReference type="Gene3D" id="3.90.45.10">
    <property type="entry name" value="Peptide deformylase"/>
    <property type="match status" value="1"/>
</dbReference>
<dbReference type="HAMAP" id="MF_00163">
    <property type="entry name" value="Pep_deformylase"/>
    <property type="match status" value="1"/>
</dbReference>
<dbReference type="InterPro" id="IPR023635">
    <property type="entry name" value="Peptide_deformylase"/>
</dbReference>
<dbReference type="InterPro" id="IPR036821">
    <property type="entry name" value="Peptide_deformylase_sf"/>
</dbReference>
<dbReference type="NCBIfam" id="TIGR00079">
    <property type="entry name" value="pept_deformyl"/>
    <property type="match status" value="1"/>
</dbReference>
<dbReference type="NCBIfam" id="NF001159">
    <property type="entry name" value="PRK00150.1-3"/>
    <property type="match status" value="1"/>
</dbReference>
<dbReference type="PANTHER" id="PTHR10458">
    <property type="entry name" value="PEPTIDE DEFORMYLASE"/>
    <property type="match status" value="1"/>
</dbReference>
<dbReference type="PANTHER" id="PTHR10458:SF22">
    <property type="entry name" value="PEPTIDE DEFORMYLASE"/>
    <property type="match status" value="1"/>
</dbReference>
<dbReference type="Pfam" id="PF01327">
    <property type="entry name" value="Pep_deformylase"/>
    <property type="match status" value="1"/>
</dbReference>
<dbReference type="PIRSF" id="PIRSF004749">
    <property type="entry name" value="Pep_def"/>
    <property type="match status" value="1"/>
</dbReference>
<dbReference type="PRINTS" id="PR01576">
    <property type="entry name" value="PDEFORMYLASE"/>
</dbReference>
<dbReference type="SUPFAM" id="SSF56420">
    <property type="entry name" value="Peptide deformylase"/>
    <property type="match status" value="1"/>
</dbReference>
<feature type="chain" id="PRO_1000097314" description="Peptide deformylase">
    <location>
        <begin position="1"/>
        <end position="174"/>
    </location>
</feature>
<feature type="active site" evidence="1">
    <location>
        <position position="139"/>
    </location>
</feature>
<feature type="binding site" evidence="1">
    <location>
        <position position="96"/>
    </location>
    <ligand>
        <name>Fe cation</name>
        <dbReference type="ChEBI" id="CHEBI:24875"/>
    </ligand>
</feature>
<feature type="binding site" evidence="1">
    <location>
        <position position="138"/>
    </location>
    <ligand>
        <name>Fe cation</name>
        <dbReference type="ChEBI" id="CHEBI:24875"/>
    </ligand>
</feature>
<feature type="binding site" evidence="1">
    <location>
        <position position="142"/>
    </location>
    <ligand>
        <name>Fe cation</name>
        <dbReference type="ChEBI" id="CHEBI:24875"/>
    </ligand>
</feature>
<protein>
    <recommendedName>
        <fullName evidence="1">Peptide deformylase</fullName>
        <shortName evidence="1">PDF</shortName>
        <ecNumber evidence="1">3.5.1.88</ecNumber>
    </recommendedName>
    <alternativeName>
        <fullName evidence="1">Polypeptide deformylase</fullName>
    </alternativeName>
</protein>
<sequence>MALLEIIHYPSKILRTISKEVVSFDSKLHQQLDDMHETMIASEGIGLAAIQVGLPLRMLIINLPQEDGVQHKEDCLEIINPKWIETKGSMMYKEGCLSVPGFYEEVERFEKVKIEYQNRFAEVKILEASELLAVAIQHEIDHLNGVLFVDKLSILKRKKFEKELKELQKKQKRE</sequence>
<accession>B6JM24</accession>
<proteinExistence type="inferred from homology"/>
<organism>
    <name type="scientific">Helicobacter pylori (strain P12)</name>
    <dbReference type="NCBI Taxonomy" id="570508"/>
    <lineage>
        <taxon>Bacteria</taxon>
        <taxon>Pseudomonadati</taxon>
        <taxon>Campylobacterota</taxon>
        <taxon>Epsilonproteobacteria</taxon>
        <taxon>Campylobacterales</taxon>
        <taxon>Helicobacteraceae</taxon>
        <taxon>Helicobacter</taxon>
    </lineage>
</organism>
<name>DEF_HELP2</name>
<comment type="function">
    <text evidence="1">Removes the formyl group from the N-terminal Met of newly synthesized proteins. Requires at least a dipeptide for an efficient rate of reaction. N-terminal L-methionine is a prerequisite for activity but the enzyme has broad specificity at other positions.</text>
</comment>
<comment type="catalytic activity">
    <reaction evidence="1">
        <text>N-terminal N-formyl-L-methionyl-[peptide] + H2O = N-terminal L-methionyl-[peptide] + formate</text>
        <dbReference type="Rhea" id="RHEA:24420"/>
        <dbReference type="Rhea" id="RHEA-COMP:10639"/>
        <dbReference type="Rhea" id="RHEA-COMP:10640"/>
        <dbReference type="ChEBI" id="CHEBI:15377"/>
        <dbReference type="ChEBI" id="CHEBI:15740"/>
        <dbReference type="ChEBI" id="CHEBI:49298"/>
        <dbReference type="ChEBI" id="CHEBI:64731"/>
        <dbReference type="EC" id="3.5.1.88"/>
    </reaction>
</comment>
<comment type="cofactor">
    <cofactor evidence="1">
        <name>Fe(2+)</name>
        <dbReference type="ChEBI" id="CHEBI:29033"/>
    </cofactor>
    <text evidence="1">Binds 1 Fe(2+) ion.</text>
</comment>
<comment type="similarity">
    <text evidence="1">Belongs to the polypeptide deformylase family.</text>
</comment>